<accession>Q914L0</accession>
<proteinExistence type="predicted"/>
<gene>
    <name type="primary">SIFV0020</name>
</gene>
<reference key="1">
    <citation type="journal article" date="2000" name="Virology">
        <title>A novel lipothrixvirus, SIFV, of the extremely thermophilic crenarchaeon Sulfolobus.</title>
        <authorList>
            <person name="Arnold H.P."/>
            <person name="Zillig W."/>
            <person name="Ziese U."/>
            <person name="Holz I."/>
            <person name="Crosby M."/>
            <person name="Utterback T."/>
            <person name="Weidmann J.F."/>
            <person name="Umayam L.A."/>
            <person name="Teffera K."/>
            <person name="Kristjanson J.K."/>
            <person name="Klenk H.P."/>
            <person name="Nelson K.E."/>
            <person name="Fraser C.M."/>
        </authorList>
    </citation>
    <scope>NUCLEOTIDE SEQUENCE [GENOMIC DNA]</scope>
</reference>
<evidence type="ECO:0000255" key="1"/>
<organism>
    <name type="scientific">Sulfolobus islandicus filamentous virus (isolate Iceland/Hveragerdi)</name>
    <name type="common">SIFV</name>
    <dbReference type="NCBI Taxonomy" id="654908"/>
    <lineage>
        <taxon>Viruses</taxon>
        <taxon>Adnaviria</taxon>
        <taxon>Zilligvirae</taxon>
        <taxon>Taleaviricota</taxon>
        <taxon>Tokiviricetes</taxon>
        <taxon>Ligamenvirales</taxon>
        <taxon>Lipothrixviridae</taxon>
        <taxon>Betalipothrixvirus</taxon>
        <taxon>Sulfolobus islandicus filamentous virus</taxon>
    </lineage>
</organism>
<dbReference type="EMBL" id="AF440571">
    <property type="protein sequence ID" value="AAL27731.1"/>
    <property type="molecule type" value="Genomic_DNA"/>
</dbReference>
<dbReference type="RefSeq" id="NP_445685.1">
    <property type="nucleotide sequence ID" value="NC_003214.2"/>
</dbReference>
<dbReference type="SMR" id="Q914L0"/>
<dbReference type="GeneID" id="922312"/>
<dbReference type="KEGG" id="vg:922312"/>
<dbReference type="Proteomes" id="UP000007017">
    <property type="component" value="Segment"/>
</dbReference>
<organismHost>
    <name type="scientific">Saccharolobus islandicus</name>
    <name type="common">Sulfolobus islandicus</name>
    <dbReference type="NCBI Taxonomy" id="43080"/>
</organismHost>
<keyword id="KW-0175">Coiled coil</keyword>
<keyword id="KW-1185">Reference proteome</keyword>
<protein>
    <recommendedName>
        <fullName>Uncharacterized protein 20</fullName>
    </recommendedName>
</protein>
<name>Y020_SIFVH</name>
<feature type="chain" id="PRO_0000385409" description="Uncharacterized protein 20">
    <location>
        <begin position="1"/>
        <end position="95"/>
    </location>
</feature>
<feature type="coiled-coil region" evidence="1">
    <location>
        <begin position="60"/>
        <end position="89"/>
    </location>
</feature>
<sequence>MVEVVKKQIECKIKINSVNGIVSLDCETKVIFNVKDSEMPYAVSSIKEIGFVETIKTDQVKNMINRIVEELDKRIDEIKEGLNELEKSGLTIEVD</sequence>